<name>T1SG_MYCPN</name>
<comment type="function">
    <text evidence="2 4">The specificity (S) subunit of a type I methyltransferase (MTase); this subunit dictates DNA sequence specificity. The single R subunit has multiple frameshifts and is probably not expressed.</text>
</comment>
<comment type="subunit">
    <text evidence="1">The methyltransferase is composed of M and S polypeptides.</text>
</comment>
<comment type="domain">
    <text evidence="1">Contains two DNA recognition domains, each specifying recognition of one of the two defined components of the target sequence.</text>
</comment>
<comment type="similarity">
    <text evidence="3">Belongs to the type-I restriction system S methylase family.</text>
</comment>
<protein>
    <recommendedName>
        <fullName evidence="2">Putative type I specificity subunit S.MpnORF285P</fullName>
        <shortName>S protein</shortName>
        <shortName evidence="2">S.MpnORF285P</shortName>
    </recommendedName>
    <alternativeName>
        <fullName>Putative type-1 specificity subunit MPN_285</fullName>
    </alternativeName>
    <alternativeName>
        <fullName>S.MpnORFGP</fullName>
    </alternativeName>
</protein>
<dbReference type="EMBL" id="U00089">
    <property type="protein sequence ID" value="AAB96198.1"/>
    <property type="molecule type" value="Genomic_DNA"/>
</dbReference>
<dbReference type="PIR" id="S73876">
    <property type="entry name" value="S73876"/>
</dbReference>
<dbReference type="STRING" id="272634.MPN_285"/>
<dbReference type="REBASE" id="6701">
    <property type="entry name" value="S.MpnORF285P"/>
</dbReference>
<dbReference type="EnsemblBacteria" id="AAB96198">
    <property type="protein sequence ID" value="AAB96198"/>
    <property type="gene ID" value="MPN_285"/>
</dbReference>
<dbReference type="KEGG" id="mpn:MPN_285"/>
<dbReference type="HOGENOM" id="CLU_021095_6_2_14"/>
<dbReference type="PRO" id="PR:P75492"/>
<dbReference type="Proteomes" id="UP000000808">
    <property type="component" value="Chromosome"/>
</dbReference>
<dbReference type="GO" id="GO:0003677">
    <property type="term" value="F:DNA binding"/>
    <property type="evidence" value="ECO:0007669"/>
    <property type="project" value="UniProtKB-KW"/>
</dbReference>
<dbReference type="GO" id="GO:0009307">
    <property type="term" value="P:DNA restriction-modification system"/>
    <property type="evidence" value="ECO:0007669"/>
    <property type="project" value="UniProtKB-KW"/>
</dbReference>
<dbReference type="CDD" id="cd17255">
    <property type="entry name" value="RMtype1_S_Fco49512ORF2615P-TRD2-CR2_like"/>
    <property type="match status" value="1"/>
</dbReference>
<dbReference type="Gene3D" id="3.90.220.20">
    <property type="entry name" value="DNA methylase specificity domains"/>
    <property type="match status" value="2"/>
</dbReference>
<dbReference type="InterPro" id="IPR000055">
    <property type="entry name" value="Restrct_endonuc_typeI_TRD"/>
</dbReference>
<dbReference type="InterPro" id="IPR044946">
    <property type="entry name" value="Restrct_endonuc_typeI_TRD_sf"/>
</dbReference>
<dbReference type="InterPro" id="IPR051212">
    <property type="entry name" value="Type-I_RE_S_subunit"/>
</dbReference>
<dbReference type="PANTHER" id="PTHR43140:SF1">
    <property type="entry name" value="TYPE I RESTRICTION ENZYME ECOKI SPECIFICITY SUBUNIT"/>
    <property type="match status" value="1"/>
</dbReference>
<dbReference type="PANTHER" id="PTHR43140">
    <property type="entry name" value="TYPE-1 RESTRICTION ENZYME ECOKI SPECIFICITY PROTEIN"/>
    <property type="match status" value="1"/>
</dbReference>
<dbReference type="Pfam" id="PF01420">
    <property type="entry name" value="Methylase_S"/>
    <property type="match status" value="2"/>
</dbReference>
<dbReference type="SUPFAM" id="SSF116734">
    <property type="entry name" value="DNA methylase specificity domain"/>
    <property type="match status" value="1"/>
</dbReference>
<dbReference type="SUPFAM" id="SSF158791">
    <property type="entry name" value="MgtE N-terminal domain-like"/>
    <property type="match status" value="1"/>
</dbReference>
<evidence type="ECO:0000250" key="1">
    <source>
        <dbReference type="UniProtKB" id="P05719"/>
    </source>
</evidence>
<evidence type="ECO:0000303" key="2">
    <source>
    </source>
</evidence>
<evidence type="ECO:0000305" key="3"/>
<evidence type="ECO:0000305" key="4">
    <source>
    </source>
</evidence>
<proteinExistence type="inferred from homology"/>
<gene>
    <name type="ordered locus">MPN_285</name>
    <name type="ORF">A65_orf306</name>
    <name type="ORF">MP550</name>
</gene>
<keyword id="KW-0238">DNA-binding</keyword>
<keyword id="KW-1185">Reference proteome</keyword>
<keyword id="KW-0680">Restriction system</keyword>
<reference key="1">
    <citation type="journal article" date="1996" name="Nucleic Acids Res.">
        <title>Complete sequence analysis of the genome of the bacterium Mycoplasma pneumoniae.</title>
        <authorList>
            <person name="Himmelreich R."/>
            <person name="Hilbert H."/>
            <person name="Plagens H."/>
            <person name="Pirkl E."/>
            <person name="Li B.-C."/>
            <person name="Herrmann R."/>
        </authorList>
    </citation>
    <scope>NUCLEOTIDE SEQUENCE [LARGE SCALE GENOMIC DNA]</scope>
    <source>
        <strain>ATCC 29342 / M129 / Subtype 1</strain>
    </source>
</reference>
<reference key="2">
    <citation type="journal article" date="2003" name="Nucleic Acids Res.">
        <title>A nomenclature for restriction enzymes, DNA methyltransferases, homing endonucleases and their genes.</title>
        <authorList>
            <person name="Roberts R.J."/>
            <person name="Belfort M."/>
            <person name="Bestor T."/>
            <person name="Bhagwat A.S."/>
            <person name="Bickle T.A."/>
            <person name="Bitinaite J."/>
            <person name="Blumenthal R.M."/>
            <person name="Degtyarev S.K."/>
            <person name="Dryden D.T."/>
            <person name="Dybvig K."/>
            <person name="Firman K."/>
            <person name="Gromova E.S."/>
            <person name="Gumport R.I."/>
            <person name="Halford S.E."/>
            <person name="Hattman S."/>
            <person name="Heitman J."/>
            <person name="Hornby D.P."/>
            <person name="Janulaitis A."/>
            <person name="Jeltsch A."/>
            <person name="Josephsen J."/>
            <person name="Kiss A."/>
            <person name="Klaenhammer T.R."/>
            <person name="Kobayashi I."/>
            <person name="Kong H."/>
            <person name="Krueger D.H."/>
            <person name="Lacks S."/>
            <person name="Marinus M.G."/>
            <person name="Miyahara M."/>
            <person name="Morgan R.D."/>
            <person name="Murray N.E."/>
            <person name="Nagaraja V."/>
            <person name="Piekarowicz A."/>
            <person name="Pingoud A."/>
            <person name="Raleigh E."/>
            <person name="Rao D.N."/>
            <person name="Reich N."/>
            <person name="Repin V.E."/>
            <person name="Selker E.U."/>
            <person name="Shaw P.C."/>
            <person name="Stein D.C."/>
            <person name="Stoddard B.L."/>
            <person name="Szybalski W."/>
            <person name="Trautner T.A."/>
            <person name="Van Etten J.L."/>
            <person name="Vitor J.M."/>
            <person name="Wilson G.G."/>
            <person name="Xu S.Y."/>
        </authorList>
    </citation>
    <scope>NOMENCLATURE</scope>
</reference>
<organism>
    <name type="scientific">Mycoplasma pneumoniae (strain ATCC 29342 / M129 / Subtype 1)</name>
    <name type="common">Mycoplasmoides pneumoniae</name>
    <dbReference type="NCBI Taxonomy" id="272634"/>
    <lineage>
        <taxon>Bacteria</taxon>
        <taxon>Bacillati</taxon>
        <taxon>Mycoplasmatota</taxon>
        <taxon>Mycoplasmoidales</taxon>
        <taxon>Mycoplasmoidaceae</taxon>
        <taxon>Mycoplasmoides</taxon>
    </lineage>
</organism>
<accession>P75492</accession>
<feature type="chain" id="PRO_0000198051" description="Putative type I specificity subunit S.MpnORF285P">
    <location>
        <begin position="1"/>
        <end position="306"/>
    </location>
</feature>
<sequence>MAEIPIDFPPLKIQEKIATILDTFTELSAELSAELSAELSAELSAELSAELSAELSAELSAELSAELSAELSAELSAELSAELSAELRERRKQYAFYRDYLLNQENIRKIYGANIPFETFQIRDICEINRGREINEKYLRENPGEFPVYSSATTNGGLIGKINDYDFHGEYVTWTTGGAHAGNVFYRNEKFSCSQNCGLLEVKNKNKFSSKFLCFALKLQSKKFVNYASAIPVLTIKRIAEIELSFPPLEIQEKIADILFAFEKLCNDLTEGIPAEIELRKKQLDYYQNFLFNWVQNKKLESLKSL</sequence>